<comment type="function">
    <text evidence="1">Catalyzes the hydrolytic cleavage of the carbon-nitrogen bond in imidazolone-5-propanoate to yield N-formimidoyl-L-glutamate. It is the third step in the universal histidine degradation pathway.</text>
</comment>
<comment type="catalytic activity">
    <reaction evidence="1">
        <text>4-imidazolone-5-propanoate + H2O = N-formimidoyl-L-glutamate</text>
        <dbReference type="Rhea" id="RHEA:23660"/>
        <dbReference type="ChEBI" id="CHEBI:15377"/>
        <dbReference type="ChEBI" id="CHEBI:58928"/>
        <dbReference type="ChEBI" id="CHEBI:77893"/>
        <dbReference type="EC" id="3.5.2.7"/>
    </reaction>
</comment>
<comment type="cofactor">
    <cofactor evidence="1">
        <name>Zn(2+)</name>
        <dbReference type="ChEBI" id="CHEBI:29105"/>
    </cofactor>
    <cofactor evidence="1">
        <name>Fe(3+)</name>
        <dbReference type="ChEBI" id="CHEBI:29034"/>
    </cofactor>
    <text evidence="1">Binds 1 zinc or iron ion per subunit.</text>
</comment>
<comment type="pathway">
    <text evidence="1">Amino-acid degradation; L-histidine degradation into L-glutamate; N-formimidoyl-L-glutamate from L-histidine: step 3/3.</text>
</comment>
<comment type="subcellular location">
    <subcellularLocation>
        <location evidence="1">Cytoplasm</location>
    </subcellularLocation>
</comment>
<comment type="similarity">
    <text evidence="1">Belongs to the metallo-dependent hydrolases superfamily. HutI family.</text>
</comment>
<feature type="chain" id="PRO_1000205585" description="Imidazolonepropionase">
    <location>
        <begin position="1"/>
        <end position="401"/>
    </location>
</feature>
<feature type="binding site" evidence="1">
    <location>
        <position position="65"/>
    </location>
    <ligand>
        <name>Fe(3+)</name>
        <dbReference type="ChEBI" id="CHEBI:29034"/>
    </ligand>
</feature>
<feature type="binding site" evidence="1">
    <location>
        <position position="65"/>
    </location>
    <ligand>
        <name>Zn(2+)</name>
        <dbReference type="ChEBI" id="CHEBI:29105"/>
    </ligand>
</feature>
<feature type="binding site" evidence="1">
    <location>
        <position position="67"/>
    </location>
    <ligand>
        <name>Fe(3+)</name>
        <dbReference type="ChEBI" id="CHEBI:29034"/>
    </ligand>
</feature>
<feature type="binding site" evidence="1">
    <location>
        <position position="67"/>
    </location>
    <ligand>
        <name>Zn(2+)</name>
        <dbReference type="ChEBI" id="CHEBI:29105"/>
    </ligand>
</feature>
<feature type="binding site" evidence="1">
    <location>
        <position position="74"/>
    </location>
    <ligand>
        <name>4-imidazolone-5-propanoate</name>
        <dbReference type="ChEBI" id="CHEBI:77893"/>
    </ligand>
</feature>
<feature type="binding site" evidence="1">
    <location>
        <position position="132"/>
    </location>
    <ligand>
        <name>4-imidazolone-5-propanoate</name>
        <dbReference type="ChEBI" id="CHEBI:77893"/>
    </ligand>
</feature>
<feature type="binding site" evidence="1">
    <location>
        <position position="132"/>
    </location>
    <ligand>
        <name>N-formimidoyl-L-glutamate</name>
        <dbReference type="ChEBI" id="CHEBI:58928"/>
    </ligand>
</feature>
<feature type="binding site" evidence="1">
    <location>
        <position position="164"/>
    </location>
    <ligand>
        <name>4-imidazolone-5-propanoate</name>
        <dbReference type="ChEBI" id="CHEBI:77893"/>
    </ligand>
</feature>
<feature type="binding site" evidence="1">
    <location>
        <position position="225"/>
    </location>
    <ligand>
        <name>Fe(3+)</name>
        <dbReference type="ChEBI" id="CHEBI:29034"/>
    </ligand>
</feature>
<feature type="binding site" evidence="1">
    <location>
        <position position="225"/>
    </location>
    <ligand>
        <name>Zn(2+)</name>
        <dbReference type="ChEBI" id="CHEBI:29105"/>
    </ligand>
</feature>
<feature type="binding site" evidence="1">
    <location>
        <position position="228"/>
    </location>
    <ligand>
        <name>4-imidazolone-5-propanoate</name>
        <dbReference type="ChEBI" id="CHEBI:77893"/>
    </ligand>
</feature>
<feature type="binding site" evidence="1">
    <location>
        <position position="314"/>
    </location>
    <ligand>
        <name>N-formimidoyl-L-glutamate</name>
        <dbReference type="ChEBI" id="CHEBI:58928"/>
    </ligand>
</feature>
<feature type="binding site" evidence="1">
    <location>
        <position position="316"/>
    </location>
    <ligand>
        <name>N-formimidoyl-L-glutamate</name>
        <dbReference type="ChEBI" id="CHEBI:58928"/>
    </ligand>
</feature>
<feature type="binding site" evidence="1">
    <location>
        <position position="317"/>
    </location>
    <ligand>
        <name>4-imidazolone-5-propanoate</name>
        <dbReference type="ChEBI" id="CHEBI:77893"/>
    </ligand>
</feature>
<keyword id="KW-0963">Cytoplasm</keyword>
<keyword id="KW-0369">Histidine metabolism</keyword>
<keyword id="KW-0378">Hydrolase</keyword>
<keyword id="KW-0408">Iron</keyword>
<keyword id="KW-0479">Metal-binding</keyword>
<keyword id="KW-1185">Reference proteome</keyword>
<keyword id="KW-0862">Zinc</keyword>
<name>HUTI_MICLC</name>
<protein>
    <recommendedName>
        <fullName evidence="1">Imidazolonepropionase</fullName>
        <ecNumber evidence="1">3.5.2.7</ecNumber>
    </recommendedName>
    <alternativeName>
        <fullName evidence="1">Imidazolone-5-propionate hydrolase</fullName>
    </alternativeName>
</protein>
<reference key="1">
    <citation type="journal article" date="2010" name="J. Bacteriol.">
        <title>Genome sequence of the Fleming strain of Micrococcus luteus, a simple free-living actinobacterium.</title>
        <authorList>
            <person name="Young M."/>
            <person name="Artsatbanov V."/>
            <person name="Beller H.R."/>
            <person name="Chandra G."/>
            <person name="Chater K.F."/>
            <person name="Dover L.G."/>
            <person name="Goh E.B."/>
            <person name="Kahan T."/>
            <person name="Kaprelyants A.S."/>
            <person name="Kyrpides N."/>
            <person name="Lapidus A."/>
            <person name="Lowry S.R."/>
            <person name="Lykidis A."/>
            <person name="Mahillon J."/>
            <person name="Markowitz V."/>
            <person name="Mavromatis K."/>
            <person name="Mukamolova G.V."/>
            <person name="Oren A."/>
            <person name="Rokem J.S."/>
            <person name="Smith M.C."/>
            <person name="Young D.I."/>
            <person name="Greenblatt C.L."/>
        </authorList>
    </citation>
    <scope>NUCLEOTIDE SEQUENCE [LARGE SCALE GENOMIC DNA]</scope>
    <source>
        <strain>ATCC 4698 / DSM 20030 / JCM 1464 / CCM 169 / CCUG 5858 / IAM 1056 / NBRC 3333 / NCIMB 9278 / NCTC 2665 / VKM Ac-2230</strain>
    </source>
</reference>
<organism>
    <name type="scientific">Micrococcus luteus (strain ATCC 4698 / DSM 20030 / JCM 1464 / CCM 169 / CCUG 5858 / IAM 1056 / NBRC 3333 / NCIMB 9278 / NCTC 2665 / VKM Ac-2230)</name>
    <name type="common">Micrococcus lysodeikticus</name>
    <dbReference type="NCBI Taxonomy" id="465515"/>
    <lineage>
        <taxon>Bacteria</taxon>
        <taxon>Bacillati</taxon>
        <taxon>Actinomycetota</taxon>
        <taxon>Actinomycetes</taxon>
        <taxon>Micrococcales</taxon>
        <taxon>Micrococcaceae</taxon>
        <taxon>Micrococcus</taxon>
    </lineage>
</organism>
<sequence length="401" mass="41860">MRSTLITDIAELTTVDPEGRVLTDAAVVVEDERIAWIGPAADAPDADDRVSVEGRAVLPGWVDSHTHLVFDGDRSAEFEARMAGESYAAGGIGVTTSATRAASDDRLAELVRGRVADAVAGGTTYLETKTGYGLTVEEEARHARLLAGLREEGLVDEVTFLGAHLVPPGRDAEDYLDDVVGPMLEAVREHAGWVDVFCDTGAFDAEQTRRVLAAGVAAGLGVRLHGNQIEQGPGVGVAVEFGAASVDHVNHLSDADVEALAGTWTGWDRASATGTPGTVAGCLPACDLSTRAPLAPARRLLDAGIEVSLASNCNPGTSYTTSMNFNVGTAVLQMHLTLAEAVRAATLGGALGLRAQDRVGSLEVGKRADLHVLDAPAAIHLAYRPGMPLTHAVWRAGRRAV</sequence>
<accession>C5C8I6</accession>
<gene>
    <name evidence="1" type="primary">hutI</name>
    <name type="ordered locus">Mlut_02280</name>
</gene>
<dbReference type="EC" id="3.5.2.7" evidence="1"/>
<dbReference type="EMBL" id="CP001628">
    <property type="protein sequence ID" value="ACS29788.1"/>
    <property type="molecule type" value="Genomic_DNA"/>
</dbReference>
<dbReference type="RefSeq" id="WP_010079574.1">
    <property type="nucleotide sequence ID" value="NC_012803.1"/>
</dbReference>
<dbReference type="SMR" id="C5C8I6"/>
<dbReference type="STRING" id="465515.Mlut_02280"/>
<dbReference type="EnsemblBacteria" id="ACS29788">
    <property type="protein sequence ID" value="ACS29788"/>
    <property type="gene ID" value="Mlut_02280"/>
</dbReference>
<dbReference type="GeneID" id="93344410"/>
<dbReference type="KEGG" id="mlu:Mlut_02280"/>
<dbReference type="PATRIC" id="fig|465515.4.peg.204"/>
<dbReference type="eggNOG" id="COG1228">
    <property type="taxonomic scope" value="Bacteria"/>
</dbReference>
<dbReference type="HOGENOM" id="CLU_041647_1_0_11"/>
<dbReference type="UniPathway" id="UPA00379">
    <property type="reaction ID" value="UER00551"/>
</dbReference>
<dbReference type="Proteomes" id="UP000000738">
    <property type="component" value="Chromosome"/>
</dbReference>
<dbReference type="GO" id="GO:0005737">
    <property type="term" value="C:cytoplasm"/>
    <property type="evidence" value="ECO:0007669"/>
    <property type="project" value="UniProtKB-SubCell"/>
</dbReference>
<dbReference type="GO" id="GO:0050480">
    <property type="term" value="F:imidazolonepropionase activity"/>
    <property type="evidence" value="ECO:0007669"/>
    <property type="project" value="UniProtKB-UniRule"/>
</dbReference>
<dbReference type="GO" id="GO:0005506">
    <property type="term" value="F:iron ion binding"/>
    <property type="evidence" value="ECO:0007669"/>
    <property type="project" value="UniProtKB-UniRule"/>
</dbReference>
<dbReference type="GO" id="GO:0008270">
    <property type="term" value="F:zinc ion binding"/>
    <property type="evidence" value="ECO:0007669"/>
    <property type="project" value="UniProtKB-UniRule"/>
</dbReference>
<dbReference type="GO" id="GO:0019556">
    <property type="term" value="P:L-histidine catabolic process to glutamate and formamide"/>
    <property type="evidence" value="ECO:0007669"/>
    <property type="project" value="UniProtKB-UniPathway"/>
</dbReference>
<dbReference type="GO" id="GO:0019557">
    <property type="term" value="P:L-histidine catabolic process to glutamate and formate"/>
    <property type="evidence" value="ECO:0007669"/>
    <property type="project" value="UniProtKB-UniPathway"/>
</dbReference>
<dbReference type="Gene3D" id="3.20.20.140">
    <property type="entry name" value="Metal-dependent hydrolases"/>
    <property type="match status" value="1"/>
</dbReference>
<dbReference type="Gene3D" id="2.30.40.10">
    <property type="entry name" value="Urease, subunit C, domain 1"/>
    <property type="match status" value="1"/>
</dbReference>
<dbReference type="HAMAP" id="MF_00372">
    <property type="entry name" value="HutI"/>
    <property type="match status" value="1"/>
</dbReference>
<dbReference type="InterPro" id="IPR006680">
    <property type="entry name" value="Amidohydro-rel"/>
</dbReference>
<dbReference type="InterPro" id="IPR005920">
    <property type="entry name" value="HutI"/>
</dbReference>
<dbReference type="InterPro" id="IPR011059">
    <property type="entry name" value="Metal-dep_hydrolase_composite"/>
</dbReference>
<dbReference type="InterPro" id="IPR032466">
    <property type="entry name" value="Metal_Hydrolase"/>
</dbReference>
<dbReference type="NCBIfam" id="TIGR01224">
    <property type="entry name" value="hutI"/>
    <property type="match status" value="1"/>
</dbReference>
<dbReference type="PANTHER" id="PTHR42752">
    <property type="entry name" value="IMIDAZOLONEPROPIONASE"/>
    <property type="match status" value="1"/>
</dbReference>
<dbReference type="PANTHER" id="PTHR42752:SF1">
    <property type="entry name" value="IMIDAZOLONEPROPIONASE-RELATED"/>
    <property type="match status" value="1"/>
</dbReference>
<dbReference type="Pfam" id="PF01979">
    <property type="entry name" value="Amidohydro_1"/>
    <property type="match status" value="1"/>
</dbReference>
<dbReference type="SUPFAM" id="SSF51338">
    <property type="entry name" value="Composite domain of metallo-dependent hydrolases"/>
    <property type="match status" value="1"/>
</dbReference>
<dbReference type="SUPFAM" id="SSF51556">
    <property type="entry name" value="Metallo-dependent hydrolases"/>
    <property type="match status" value="1"/>
</dbReference>
<evidence type="ECO:0000255" key="1">
    <source>
        <dbReference type="HAMAP-Rule" id="MF_00372"/>
    </source>
</evidence>
<proteinExistence type="inferred from homology"/>